<evidence type="ECO:0000250" key="1"/>
<evidence type="ECO:0000255" key="2"/>
<evidence type="ECO:0000255" key="3">
    <source>
        <dbReference type="HAMAP-Rule" id="MF_00631"/>
    </source>
</evidence>
<dbReference type="EMBL" id="AE000516">
    <property type="protein sequence ID" value="AAK44236.1"/>
    <property type="molecule type" value="Genomic_DNA"/>
</dbReference>
<dbReference type="PIR" id="A70699">
    <property type="entry name" value="A70699"/>
</dbReference>
<dbReference type="RefSeq" id="WP_003400344.1">
    <property type="nucleotide sequence ID" value="NZ_KK341227.1"/>
</dbReference>
<dbReference type="BMRB" id="P9WP56"/>
<dbReference type="SMR" id="P9WP56"/>
<dbReference type="GeneID" id="45423970"/>
<dbReference type="KEGG" id="mtc:MT0014"/>
<dbReference type="PATRIC" id="fig|83331.31.peg.15"/>
<dbReference type="HOGENOM" id="CLU_149126_2_0_11"/>
<dbReference type="Proteomes" id="UP000001020">
    <property type="component" value="Chromosome"/>
</dbReference>
<dbReference type="GO" id="GO:0005886">
    <property type="term" value="C:plasma membrane"/>
    <property type="evidence" value="ECO:0007669"/>
    <property type="project" value="UniProtKB-SubCell"/>
</dbReference>
<dbReference type="GO" id="GO:0051301">
    <property type="term" value="P:cell division"/>
    <property type="evidence" value="ECO:0007669"/>
    <property type="project" value="UniProtKB-UniRule"/>
</dbReference>
<dbReference type="GO" id="GO:0008360">
    <property type="term" value="P:regulation of cell shape"/>
    <property type="evidence" value="ECO:0007669"/>
    <property type="project" value="UniProtKB-KW"/>
</dbReference>
<dbReference type="HAMAP" id="MF_00631">
    <property type="entry name" value="CrgA"/>
    <property type="match status" value="1"/>
</dbReference>
<dbReference type="InterPro" id="IPR009619">
    <property type="entry name" value="CrgA"/>
</dbReference>
<dbReference type="NCBIfam" id="NF001194">
    <property type="entry name" value="PRK00159.1"/>
    <property type="match status" value="1"/>
</dbReference>
<dbReference type="Pfam" id="PF06781">
    <property type="entry name" value="CrgA"/>
    <property type="match status" value="1"/>
</dbReference>
<feature type="chain" id="PRO_0000427010" description="Cell division protein CrgA">
    <location>
        <begin position="1"/>
        <end position="93"/>
    </location>
</feature>
<feature type="topological domain" description="Cytoplasmic" evidence="2">
    <location>
        <begin position="1"/>
        <end position="30"/>
    </location>
</feature>
<feature type="transmembrane region" description="Helical" evidence="3">
    <location>
        <begin position="31"/>
        <end position="51"/>
    </location>
</feature>
<feature type="topological domain" description="Extracellular" evidence="2">
    <location>
        <begin position="52"/>
        <end position="69"/>
    </location>
</feature>
<feature type="transmembrane region" description="Helical" evidence="3">
    <location>
        <begin position="70"/>
        <end position="90"/>
    </location>
</feature>
<feature type="topological domain" description="Cytoplasmic" evidence="2">
    <location>
        <begin position="91"/>
        <end position="93"/>
    </location>
</feature>
<gene>
    <name evidence="3" type="primary">crgA</name>
    <name type="ordered locus">MT0014</name>
</gene>
<comment type="function">
    <text evidence="3">Involved in cell division. Plays an important role in septal peptidoglycan synthesis and cell shape morphogenesis. May facilitate the recruitment of the peptidoglycan synthesis machinery to poles and septal zones and coordinate peptidoglycan synthesis at these sites (By similarity).</text>
</comment>
<comment type="subcellular location">
    <subcellularLocation>
        <location evidence="3">Cell membrane</location>
        <topology evidence="3">Multi-pass membrane protein</topology>
    </subcellularLocation>
    <text evidence="1">Localizes to midcell sites in an FtsZ-dependent manner and colocalizes with FtsZ. Localizes at septa, at poles and on membranes (By similarity).</text>
</comment>
<comment type="similarity">
    <text evidence="3">Belongs to the CrgA family.</text>
</comment>
<keyword id="KW-0131">Cell cycle</keyword>
<keyword id="KW-0132">Cell division</keyword>
<keyword id="KW-1003">Cell membrane</keyword>
<keyword id="KW-0133">Cell shape</keyword>
<keyword id="KW-0472">Membrane</keyword>
<keyword id="KW-1185">Reference proteome</keyword>
<keyword id="KW-0812">Transmembrane</keyword>
<keyword id="KW-1133">Transmembrane helix</keyword>
<sequence length="93" mass="10430">MPKSKVRKKNDFTVSAVSRTPMKVKVGPSSVWFVSLFIGLMLIGLIWLMVFQLAAIGSQAPTALNWMAQLGPWNYAIAFAFMITGLLLTMRWH</sequence>
<organism>
    <name type="scientific">Mycobacterium tuberculosis (strain CDC 1551 / Oshkosh)</name>
    <dbReference type="NCBI Taxonomy" id="83331"/>
    <lineage>
        <taxon>Bacteria</taxon>
        <taxon>Bacillati</taxon>
        <taxon>Actinomycetota</taxon>
        <taxon>Actinomycetes</taxon>
        <taxon>Mycobacteriales</taxon>
        <taxon>Mycobacteriaceae</taxon>
        <taxon>Mycobacterium</taxon>
        <taxon>Mycobacterium tuberculosis complex</taxon>
    </lineage>
</organism>
<name>CRGA_MYCTO</name>
<reference key="1">
    <citation type="journal article" date="2002" name="J. Bacteriol.">
        <title>Whole-genome comparison of Mycobacterium tuberculosis clinical and laboratory strains.</title>
        <authorList>
            <person name="Fleischmann R.D."/>
            <person name="Alland D."/>
            <person name="Eisen J.A."/>
            <person name="Carpenter L."/>
            <person name="White O."/>
            <person name="Peterson J.D."/>
            <person name="DeBoy R.T."/>
            <person name="Dodson R.J."/>
            <person name="Gwinn M.L."/>
            <person name="Haft D.H."/>
            <person name="Hickey E.K."/>
            <person name="Kolonay J.F."/>
            <person name="Nelson W.C."/>
            <person name="Umayam L.A."/>
            <person name="Ermolaeva M.D."/>
            <person name="Salzberg S.L."/>
            <person name="Delcher A."/>
            <person name="Utterback T.R."/>
            <person name="Weidman J.F."/>
            <person name="Khouri H.M."/>
            <person name="Gill J."/>
            <person name="Mikula A."/>
            <person name="Bishai W."/>
            <person name="Jacobs W.R. Jr."/>
            <person name="Venter J.C."/>
            <person name="Fraser C.M."/>
        </authorList>
    </citation>
    <scope>NUCLEOTIDE SEQUENCE [LARGE SCALE GENOMIC DNA]</scope>
    <source>
        <strain>CDC 1551 / Oshkosh</strain>
    </source>
</reference>
<accession>P9WP56</accession>
<accession>L0T422</accession>
<accession>P67376</accession>
<accession>P71581</accession>
<proteinExistence type="inferred from homology"/>
<protein>
    <recommendedName>
        <fullName evidence="3">Cell division protein CrgA</fullName>
    </recommendedName>
</protein>